<reference key="1">
    <citation type="journal article" date="2000" name="Nature">
        <title>Complete DNA sequence of a serogroup A strain of Neisseria meningitidis Z2491.</title>
        <authorList>
            <person name="Parkhill J."/>
            <person name="Achtman M."/>
            <person name="James K.D."/>
            <person name="Bentley S.D."/>
            <person name="Churcher C.M."/>
            <person name="Klee S.R."/>
            <person name="Morelli G."/>
            <person name="Basham D."/>
            <person name="Brown D."/>
            <person name="Chillingworth T."/>
            <person name="Davies R.M."/>
            <person name="Davis P."/>
            <person name="Devlin K."/>
            <person name="Feltwell T."/>
            <person name="Hamlin N."/>
            <person name="Holroyd S."/>
            <person name="Jagels K."/>
            <person name="Leather S."/>
            <person name="Moule S."/>
            <person name="Mungall K.L."/>
            <person name="Quail M.A."/>
            <person name="Rajandream M.A."/>
            <person name="Rutherford K.M."/>
            <person name="Simmonds M."/>
            <person name="Skelton J."/>
            <person name="Whitehead S."/>
            <person name="Spratt B.G."/>
            <person name="Barrell B.G."/>
        </authorList>
    </citation>
    <scope>NUCLEOTIDE SEQUENCE [LARGE SCALE GENOMIC DNA]</scope>
    <source>
        <strain>DSM 15465 / Z2491</strain>
    </source>
</reference>
<dbReference type="EC" id="3.6.-.-" evidence="1"/>
<dbReference type="EMBL" id="AL157959">
    <property type="protein sequence ID" value="CAM07738.1"/>
    <property type="molecule type" value="Genomic_DNA"/>
</dbReference>
<dbReference type="PIR" id="G81962">
    <property type="entry name" value="G81962"/>
</dbReference>
<dbReference type="RefSeq" id="WP_002246489.1">
    <property type="nucleotide sequence ID" value="NC_003116.1"/>
</dbReference>
<dbReference type="SMR" id="Q9JWB7"/>
<dbReference type="EnsemblBacteria" id="CAM07738">
    <property type="protein sequence ID" value="CAM07738"/>
    <property type="gene ID" value="NMA0454"/>
</dbReference>
<dbReference type="GeneID" id="93386903"/>
<dbReference type="KEGG" id="nma:NMA0454"/>
<dbReference type="HOGENOM" id="CLU_019624_4_1_4"/>
<dbReference type="Proteomes" id="UP000000626">
    <property type="component" value="Chromosome"/>
</dbReference>
<dbReference type="GO" id="GO:0005829">
    <property type="term" value="C:cytosol"/>
    <property type="evidence" value="ECO:0007669"/>
    <property type="project" value="TreeGrafter"/>
</dbReference>
<dbReference type="GO" id="GO:0005525">
    <property type="term" value="F:GTP binding"/>
    <property type="evidence" value="ECO:0007669"/>
    <property type="project" value="UniProtKB-UniRule"/>
</dbReference>
<dbReference type="GO" id="GO:0003924">
    <property type="term" value="F:GTPase activity"/>
    <property type="evidence" value="ECO:0007669"/>
    <property type="project" value="UniProtKB-UniRule"/>
</dbReference>
<dbReference type="GO" id="GO:0046872">
    <property type="term" value="F:metal ion binding"/>
    <property type="evidence" value="ECO:0007669"/>
    <property type="project" value="UniProtKB-KW"/>
</dbReference>
<dbReference type="GO" id="GO:0030488">
    <property type="term" value="P:tRNA methylation"/>
    <property type="evidence" value="ECO:0007669"/>
    <property type="project" value="TreeGrafter"/>
</dbReference>
<dbReference type="GO" id="GO:0002098">
    <property type="term" value="P:tRNA wobble uridine modification"/>
    <property type="evidence" value="ECO:0007669"/>
    <property type="project" value="TreeGrafter"/>
</dbReference>
<dbReference type="CDD" id="cd04164">
    <property type="entry name" value="trmE"/>
    <property type="match status" value="1"/>
</dbReference>
<dbReference type="CDD" id="cd14858">
    <property type="entry name" value="TrmE_N"/>
    <property type="match status" value="1"/>
</dbReference>
<dbReference type="FunFam" id="3.30.1360.120:FF:000001">
    <property type="entry name" value="tRNA modification GTPase MnmE"/>
    <property type="match status" value="1"/>
</dbReference>
<dbReference type="FunFam" id="3.40.50.300:FF:001376">
    <property type="entry name" value="tRNA modification GTPase MnmE"/>
    <property type="match status" value="1"/>
</dbReference>
<dbReference type="Gene3D" id="3.40.50.300">
    <property type="entry name" value="P-loop containing nucleotide triphosphate hydrolases"/>
    <property type="match status" value="1"/>
</dbReference>
<dbReference type="Gene3D" id="3.30.1360.120">
    <property type="entry name" value="Probable tRNA modification gtpase trme, domain 1"/>
    <property type="match status" value="1"/>
</dbReference>
<dbReference type="Gene3D" id="1.20.120.430">
    <property type="entry name" value="tRNA modification GTPase MnmE domain 2"/>
    <property type="match status" value="1"/>
</dbReference>
<dbReference type="HAMAP" id="MF_00379">
    <property type="entry name" value="GTPase_MnmE"/>
    <property type="match status" value="1"/>
</dbReference>
<dbReference type="InterPro" id="IPR031168">
    <property type="entry name" value="G_TrmE"/>
</dbReference>
<dbReference type="InterPro" id="IPR006073">
    <property type="entry name" value="GTP-bd"/>
</dbReference>
<dbReference type="InterPro" id="IPR018948">
    <property type="entry name" value="GTP-bd_TrmE_N"/>
</dbReference>
<dbReference type="InterPro" id="IPR004520">
    <property type="entry name" value="GTPase_MnmE"/>
</dbReference>
<dbReference type="InterPro" id="IPR027368">
    <property type="entry name" value="MnmE_dom2"/>
</dbReference>
<dbReference type="InterPro" id="IPR025867">
    <property type="entry name" value="MnmE_helical"/>
</dbReference>
<dbReference type="InterPro" id="IPR027417">
    <property type="entry name" value="P-loop_NTPase"/>
</dbReference>
<dbReference type="InterPro" id="IPR005225">
    <property type="entry name" value="Small_GTP-bd"/>
</dbReference>
<dbReference type="InterPro" id="IPR027266">
    <property type="entry name" value="TrmE/GcvT_dom1"/>
</dbReference>
<dbReference type="NCBIfam" id="TIGR00450">
    <property type="entry name" value="mnmE_trmE_thdF"/>
    <property type="match status" value="1"/>
</dbReference>
<dbReference type="NCBIfam" id="NF003661">
    <property type="entry name" value="PRK05291.1-3"/>
    <property type="match status" value="1"/>
</dbReference>
<dbReference type="NCBIfam" id="TIGR00231">
    <property type="entry name" value="small_GTP"/>
    <property type="match status" value="1"/>
</dbReference>
<dbReference type="PANTHER" id="PTHR42714">
    <property type="entry name" value="TRNA MODIFICATION GTPASE GTPBP3"/>
    <property type="match status" value="1"/>
</dbReference>
<dbReference type="PANTHER" id="PTHR42714:SF2">
    <property type="entry name" value="TRNA MODIFICATION GTPASE GTPBP3, MITOCHONDRIAL"/>
    <property type="match status" value="1"/>
</dbReference>
<dbReference type="Pfam" id="PF01926">
    <property type="entry name" value="MMR_HSR1"/>
    <property type="match status" value="1"/>
</dbReference>
<dbReference type="Pfam" id="PF12631">
    <property type="entry name" value="MnmE_helical"/>
    <property type="match status" value="1"/>
</dbReference>
<dbReference type="Pfam" id="PF10396">
    <property type="entry name" value="TrmE_N"/>
    <property type="match status" value="1"/>
</dbReference>
<dbReference type="SUPFAM" id="SSF52540">
    <property type="entry name" value="P-loop containing nucleoside triphosphate hydrolases"/>
    <property type="match status" value="1"/>
</dbReference>
<dbReference type="SUPFAM" id="SSF116878">
    <property type="entry name" value="TrmE connector domain"/>
    <property type="match status" value="1"/>
</dbReference>
<dbReference type="PROSITE" id="PS51709">
    <property type="entry name" value="G_TRME"/>
    <property type="match status" value="1"/>
</dbReference>
<protein>
    <recommendedName>
        <fullName evidence="1">tRNA modification GTPase MnmE</fullName>
        <ecNumber evidence="1">3.6.-.-</ecNumber>
    </recommendedName>
</protein>
<keyword id="KW-0963">Cytoplasm</keyword>
<keyword id="KW-0342">GTP-binding</keyword>
<keyword id="KW-0378">Hydrolase</keyword>
<keyword id="KW-0460">Magnesium</keyword>
<keyword id="KW-0479">Metal-binding</keyword>
<keyword id="KW-0547">Nucleotide-binding</keyword>
<keyword id="KW-0630">Potassium</keyword>
<keyword id="KW-0819">tRNA processing</keyword>
<feature type="chain" id="PRO_0000188894" description="tRNA modification GTPase MnmE">
    <location>
        <begin position="1"/>
        <end position="448"/>
    </location>
</feature>
<feature type="domain" description="TrmE-type G">
    <location>
        <begin position="216"/>
        <end position="373"/>
    </location>
</feature>
<feature type="binding site" evidence="1">
    <location>
        <position position="24"/>
    </location>
    <ligand>
        <name>(6S)-5-formyl-5,6,7,8-tetrahydrofolate</name>
        <dbReference type="ChEBI" id="CHEBI:57457"/>
    </ligand>
</feature>
<feature type="binding site" evidence="1">
    <location>
        <position position="81"/>
    </location>
    <ligand>
        <name>(6S)-5-formyl-5,6,7,8-tetrahydrofolate</name>
        <dbReference type="ChEBI" id="CHEBI:57457"/>
    </ligand>
</feature>
<feature type="binding site" evidence="1">
    <location>
        <position position="120"/>
    </location>
    <ligand>
        <name>(6S)-5-formyl-5,6,7,8-tetrahydrofolate</name>
        <dbReference type="ChEBI" id="CHEBI:57457"/>
    </ligand>
</feature>
<feature type="binding site" evidence="1">
    <location>
        <begin position="226"/>
        <end position="231"/>
    </location>
    <ligand>
        <name>GTP</name>
        <dbReference type="ChEBI" id="CHEBI:37565"/>
    </ligand>
</feature>
<feature type="binding site" evidence="1">
    <location>
        <position position="226"/>
    </location>
    <ligand>
        <name>K(+)</name>
        <dbReference type="ChEBI" id="CHEBI:29103"/>
    </ligand>
</feature>
<feature type="binding site" evidence="1">
    <location>
        <position position="230"/>
    </location>
    <ligand>
        <name>Mg(2+)</name>
        <dbReference type="ChEBI" id="CHEBI:18420"/>
    </ligand>
</feature>
<feature type="binding site" evidence="1">
    <location>
        <begin position="245"/>
        <end position="251"/>
    </location>
    <ligand>
        <name>GTP</name>
        <dbReference type="ChEBI" id="CHEBI:37565"/>
    </ligand>
</feature>
<feature type="binding site" evidence="1">
    <location>
        <position position="245"/>
    </location>
    <ligand>
        <name>K(+)</name>
        <dbReference type="ChEBI" id="CHEBI:29103"/>
    </ligand>
</feature>
<feature type="binding site" evidence="1">
    <location>
        <position position="247"/>
    </location>
    <ligand>
        <name>K(+)</name>
        <dbReference type="ChEBI" id="CHEBI:29103"/>
    </ligand>
</feature>
<feature type="binding site" evidence="1">
    <location>
        <position position="250"/>
    </location>
    <ligand>
        <name>K(+)</name>
        <dbReference type="ChEBI" id="CHEBI:29103"/>
    </ligand>
</feature>
<feature type="binding site" evidence="1">
    <location>
        <position position="251"/>
    </location>
    <ligand>
        <name>Mg(2+)</name>
        <dbReference type="ChEBI" id="CHEBI:18420"/>
    </ligand>
</feature>
<feature type="binding site" evidence="1">
    <location>
        <begin position="270"/>
        <end position="273"/>
    </location>
    <ligand>
        <name>GTP</name>
        <dbReference type="ChEBI" id="CHEBI:37565"/>
    </ligand>
</feature>
<feature type="binding site" evidence="1">
    <location>
        <position position="448"/>
    </location>
    <ligand>
        <name>(6S)-5-formyl-5,6,7,8-tetrahydrofolate</name>
        <dbReference type="ChEBI" id="CHEBI:57457"/>
    </ligand>
</feature>
<sequence>MSDNVPTIAAVATAPGRGGVGVIRISGKNLLPMAQALCGKTPKPRVATYADFTDEDGQAIDSGLLLFFAAPASFTGEDVIELQGHGGPVVMDMLLNRCLELGARLAEPGEFTKRAFLNDKLDLAQAEGVADLIDASSRSAARLALRSLKGDFSRRIHGLVEDLITLRMLVEATLDFPEEDIDFLEAADARGKLDGLRRAVDDVLANAQQGAILREGLNVVLVGAPNVGKSSLLNALAGDEVAIVTDIAGTTRDAVRERILIDGVPVHIVDTAGLRETDDVVERIGIERSRKAVSEADVALVLVDPREGLNEKTRAILDALPLELKRIEIHSKSDLHAHAAGGFGTGAETVIALSAKTGDGLDALKRTLLREAGWQGESEGLFLARTRHVNALKAAQEELSLAALCGNHQIELFAEHLRLAQVACGEITGEFTADDLLGVIFSRFCIGK</sequence>
<comment type="function">
    <text evidence="1">Exhibits a very high intrinsic GTPase hydrolysis rate. Involved in the addition of a carboxymethylaminomethyl (cmnm) group at the wobble position (U34) of certain tRNAs, forming tRNA-cmnm(5)s(2)U34.</text>
</comment>
<comment type="cofactor">
    <cofactor evidence="1">
        <name>K(+)</name>
        <dbReference type="ChEBI" id="CHEBI:29103"/>
    </cofactor>
    <text evidence="1">Binds 1 potassium ion per subunit.</text>
</comment>
<comment type="subunit">
    <text evidence="1">Homodimer. Heterotetramer of two MnmE and two MnmG subunits.</text>
</comment>
<comment type="subcellular location">
    <subcellularLocation>
        <location evidence="1">Cytoplasm</location>
    </subcellularLocation>
</comment>
<comment type="similarity">
    <text evidence="1">Belongs to the TRAFAC class TrmE-Era-EngA-EngB-Septin-like GTPase superfamily. TrmE GTPase family.</text>
</comment>
<organism>
    <name type="scientific">Neisseria meningitidis serogroup A / serotype 4A (strain DSM 15465 / Z2491)</name>
    <dbReference type="NCBI Taxonomy" id="122587"/>
    <lineage>
        <taxon>Bacteria</taxon>
        <taxon>Pseudomonadati</taxon>
        <taxon>Pseudomonadota</taxon>
        <taxon>Betaproteobacteria</taxon>
        <taxon>Neisseriales</taxon>
        <taxon>Neisseriaceae</taxon>
        <taxon>Neisseria</taxon>
    </lineage>
</organism>
<proteinExistence type="inferred from homology"/>
<evidence type="ECO:0000255" key="1">
    <source>
        <dbReference type="HAMAP-Rule" id="MF_00379"/>
    </source>
</evidence>
<name>MNME_NEIMA</name>
<gene>
    <name evidence="1" type="primary">mnmE</name>
    <name evidence="1" type="synonym">thdF</name>
    <name evidence="1" type="synonym">trmE</name>
    <name type="ordered locus">NMA0454</name>
</gene>
<accession>Q9JWB7</accession>
<accession>A1IPR7</accession>